<organism>
    <name type="scientific">Oryza sativa subsp. japonica</name>
    <name type="common">Rice</name>
    <dbReference type="NCBI Taxonomy" id="39947"/>
    <lineage>
        <taxon>Eukaryota</taxon>
        <taxon>Viridiplantae</taxon>
        <taxon>Streptophyta</taxon>
        <taxon>Embryophyta</taxon>
        <taxon>Tracheophyta</taxon>
        <taxon>Spermatophyta</taxon>
        <taxon>Magnoliopsida</taxon>
        <taxon>Liliopsida</taxon>
        <taxon>Poales</taxon>
        <taxon>Poaceae</taxon>
        <taxon>BOP clade</taxon>
        <taxon>Oryzoideae</taxon>
        <taxon>Oryzeae</taxon>
        <taxon>Oryzinae</taxon>
        <taxon>Oryza</taxon>
        <taxon>Oryza sativa</taxon>
    </lineage>
</organism>
<dbReference type="EMBL" id="AL606648">
    <property type="protein sequence ID" value="CAE01867.2"/>
    <property type="molecule type" value="Genomic_DNA"/>
</dbReference>
<dbReference type="EMBL" id="AL662970">
    <property type="protein sequence ID" value="CAD41735.1"/>
    <property type="molecule type" value="Genomic_DNA"/>
</dbReference>
<dbReference type="EMBL" id="AP008210">
    <property type="protein sequence ID" value="BAF15802.1"/>
    <property type="status" value="ALT_SEQ"/>
    <property type="molecule type" value="Genomic_DNA"/>
</dbReference>
<dbReference type="EMBL" id="AP014960">
    <property type="status" value="NOT_ANNOTATED_CDS"/>
    <property type="molecule type" value="Genomic_DNA"/>
</dbReference>
<dbReference type="EMBL" id="CM000141">
    <property type="protein sequence ID" value="EAZ32000.1"/>
    <property type="molecule type" value="Genomic_DNA"/>
</dbReference>
<dbReference type="RefSeq" id="XP_015634976.1">
    <property type="nucleotide sequence ID" value="XM_015779490.1"/>
</dbReference>
<dbReference type="SMR" id="Q7XSN6"/>
<dbReference type="FunCoup" id="Q7XSN6">
    <property type="interactions" value="41"/>
</dbReference>
<dbReference type="STRING" id="39947.Q7XSN6"/>
<dbReference type="PaxDb" id="39947-Q7XSN6"/>
<dbReference type="KEGG" id="dosa:Os04g0617900"/>
<dbReference type="InParanoid" id="Q7XSN6"/>
<dbReference type="OrthoDB" id="1921208at2759"/>
<dbReference type="Proteomes" id="UP000000763">
    <property type="component" value="Chromosome 4"/>
</dbReference>
<dbReference type="Proteomes" id="UP000007752">
    <property type="component" value="Chromosome 4"/>
</dbReference>
<dbReference type="Proteomes" id="UP000059680">
    <property type="component" value="Chromosome 4"/>
</dbReference>
<dbReference type="GO" id="GO:0048046">
    <property type="term" value="C:apoplast"/>
    <property type="evidence" value="ECO:0007669"/>
    <property type="project" value="UniProtKB-SubCell"/>
</dbReference>
<dbReference type="GO" id="GO:0030145">
    <property type="term" value="F:manganese ion binding"/>
    <property type="evidence" value="ECO:0007669"/>
    <property type="project" value="InterPro"/>
</dbReference>
<dbReference type="CDD" id="cd02241">
    <property type="entry name" value="cupin_OxOx"/>
    <property type="match status" value="1"/>
</dbReference>
<dbReference type="FunFam" id="2.60.120.10:FF:000005">
    <property type="entry name" value="Germin-like protein subfamily 1 member 8"/>
    <property type="match status" value="1"/>
</dbReference>
<dbReference type="Gene3D" id="2.60.120.10">
    <property type="entry name" value="Jelly Rolls"/>
    <property type="match status" value="1"/>
</dbReference>
<dbReference type="InterPro" id="IPR006045">
    <property type="entry name" value="Cupin_1"/>
</dbReference>
<dbReference type="InterPro" id="IPR001929">
    <property type="entry name" value="Germin"/>
</dbReference>
<dbReference type="InterPro" id="IPR019780">
    <property type="entry name" value="Germin_Mn-BS"/>
</dbReference>
<dbReference type="InterPro" id="IPR014710">
    <property type="entry name" value="RmlC-like_jellyroll"/>
</dbReference>
<dbReference type="InterPro" id="IPR011051">
    <property type="entry name" value="RmlC_Cupin_sf"/>
</dbReference>
<dbReference type="PANTHER" id="PTHR31238">
    <property type="entry name" value="GERMIN-LIKE PROTEIN SUBFAMILY 3 MEMBER 3"/>
    <property type="match status" value="1"/>
</dbReference>
<dbReference type="Pfam" id="PF00190">
    <property type="entry name" value="Cupin_1"/>
    <property type="match status" value="1"/>
</dbReference>
<dbReference type="PRINTS" id="PR00325">
    <property type="entry name" value="GERMIN"/>
</dbReference>
<dbReference type="SMART" id="SM00835">
    <property type="entry name" value="Cupin_1"/>
    <property type="match status" value="1"/>
</dbReference>
<dbReference type="SUPFAM" id="SSF51182">
    <property type="entry name" value="RmlC-like cupins"/>
    <property type="match status" value="1"/>
</dbReference>
<dbReference type="PROSITE" id="PS00725">
    <property type="entry name" value="GERMIN"/>
    <property type="match status" value="1"/>
</dbReference>
<gene>
    <name type="ordered locus">Os04g0617900</name>
    <name type="ordered locus">LOC_Os04g52720</name>
    <name type="ORF">OsJ_015483</name>
    <name type="ORF">OSJNBa0058K23.2</name>
    <name type="ORF">OSJNBa0093O08.12</name>
</gene>
<evidence type="ECO:0000250" key="1"/>
<evidence type="ECO:0000255" key="2"/>
<evidence type="ECO:0000305" key="3"/>
<accession>Q7XSN6</accession>
<accession>Q0JA35</accession>
<accession>Q7X8S7</accession>
<reference key="1">
    <citation type="journal article" date="2002" name="Nature">
        <title>Sequence and analysis of rice chromosome 4.</title>
        <authorList>
            <person name="Feng Q."/>
            <person name="Zhang Y."/>
            <person name="Hao P."/>
            <person name="Wang S."/>
            <person name="Fu G."/>
            <person name="Huang Y."/>
            <person name="Li Y."/>
            <person name="Zhu J."/>
            <person name="Liu Y."/>
            <person name="Hu X."/>
            <person name="Jia P."/>
            <person name="Zhang Y."/>
            <person name="Zhao Q."/>
            <person name="Ying K."/>
            <person name="Yu S."/>
            <person name="Tang Y."/>
            <person name="Weng Q."/>
            <person name="Zhang L."/>
            <person name="Lu Y."/>
            <person name="Mu J."/>
            <person name="Lu Y."/>
            <person name="Zhang L.S."/>
            <person name="Yu Z."/>
            <person name="Fan D."/>
            <person name="Liu X."/>
            <person name="Lu T."/>
            <person name="Li C."/>
            <person name="Wu Y."/>
            <person name="Sun T."/>
            <person name="Lei H."/>
            <person name="Li T."/>
            <person name="Hu H."/>
            <person name="Guan J."/>
            <person name="Wu M."/>
            <person name="Zhang R."/>
            <person name="Zhou B."/>
            <person name="Chen Z."/>
            <person name="Chen L."/>
            <person name="Jin Z."/>
            <person name="Wang R."/>
            <person name="Yin H."/>
            <person name="Cai Z."/>
            <person name="Ren S."/>
            <person name="Lv G."/>
            <person name="Gu W."/>
            <person name="Zhu G."/>
            <person name="Tu Y."/>
            <person name="Jia J."/>
            <person name="Zhang Y."/>
            <person name="Chen J."/>
            <person name="Kang H."/>
            <person name="Chen X."/>
            <person name="Shao C."/>
            <person name="Sun Y."/>
            <person name="Hu Q."/>
            <person name="Zhang X."/>
            <person name="Zhang W."/>
            <person name="Wang L."/>
            <person name="Ding C."/>
            <person name="Sheng H."/>
            <person name="Gu J."/>
            <person name="Chen S."/>
            <person name="Ni L."/>
            <person name="Zhu F."/>
            <person name="Chen W."/>
            <person name="Lan L."/>
            <person name="Lai Y."/>
            <person name="Cheng Z."/>
            <person name="Gu M."/>
            <person name="Jiang J."/>
            <person name="Li J."/>
            <person name="Hong G."/>
            <person name="Xue Y."/>
            <person name="Han B."/>
        </authorList>
    </citation>
    <scope>NUCLEOTIDE SEQUENCE [LARGE SCALE GENOMIC DNA]</scope>
    <source>
        <strain>cv. Nipponbare</strain>
    </source>
</reference>
<reference key="2">
    <citation type="journal article" date="2005" name="Nature">
        <title>The map-based sequence of the rice genome.</title>
        <authorList>
            <consortium name="International rice genome sequencing project (IRGSP)"/>
        </authorList>
    </citation>
    <scope>NUCLEOTIDE SEQUENCE [LARGE SCALE GENOMIC DNA]</scope>
    <source>
        <strain>cv. Nipponbare</strain>
    </source>
</reference>
<reference key="3">
    <citation type="journal article" date="2008" name="Nucleic Acids Res.">
        <title>The rice annotation project database (RAP-DB): 2008 update.</title>
        <authorList>
            <consortium name="The rice annotation project (RAP)"/>
        </authorList>
    </citation>
    <scope>GENOME REANNOTATION</scope>
    <source>
        <strain>cv. Nipponbare</strain>
    </source>
</reference>
<reference key="4">
    <citation type="journal article" date="2013" name="Rice">
        <title>Improvement of the Oryza sativa Nipponbare reference genome using next generation sequence and optical map data.</title>
        <authorList>
            <person name="Kawahara Y."/>
            <person name="de la Bastide M."/>
            <person name="Hamilton J.P."/>
            <person name="Kanamori H."/>
            <person name="McCombie W.R."/>
            <person name="Ouyang S."/>
            <person name="Schwartz D.C."/>
            <person name="Tanaka T."/>
            <person name="Wu J."/>
            <person name="Zhou S."/>
            <person name="Childs K.L."/>
            <person name="Davidson R.M."/>
            <person name="Lin H."/>
            <person name="Quesada-Ocampo L."/>
            <person name="Vaillancourt B."/>
            <person name="Sakai H."/>
            <person name="Lee S.S."/>
            <person name="Kim J."/>
            <person name="Numa H."/>
            <person name="Itoh T."/>
            <person name="Buell C.R."/>
            <person name="Matsumoto T."/>
        </authorList>
    </citation>
    <scope>GENOME REANNOTATION</scope>
    <source>
        <strain>cv. Nipponbare</strain>
    </source>
</reference>
<reference key="5">
    <citation type="journal article" date="2005" name="PLoS Biol.">
        <title>The genomes of Oryza sativa: a history of duplications.</title>
        <authorList>
            <person name="Yu J."/>
            <person name="Wang J."/>
            <person name="Lin W."/>
            <person name="Li S."/>
            <person name="Li H."/>
            <person name="Zhou J."/>
            <person name="Ni P."/>
            <person name="Dong W."/>
            <person name="Hu S."/>
            <person name="Zeng C."/>
            <person name="Zhang J."/>
            <person name="Zhang Y."/>
            <person name="Li R."/>
            <person name="Xu Z."/>
            <person name="Li S."/>
            <person name="Li X."/>
            <person name="Zheng H."/>
            <person name="Cong L."/>
            <person name="Lin L."/>
            <person name="Yin J."/>
            <person name="Geng J."/>
            <person name="Li G."/>
            <person name="Shi J."/>
            <person name="Liu J."/>
            <person name="Lv H."/>
            <person name="Li J."/>
            <person name="Wang J."/>
            <person name="Deng Y."/>
            <person name="Ran L."/>
            <person name="Shi X."/>
            <person name="Wang X."/>
            <person name="Wu Q."/>
            <person name="Li C."/>
            <person name="Ren X."/>
            <person name="Wang J."/>
            <person name="Wang X."/>
            <person name="Li D."/>
            <person name="Liu D."/>
            <person name="Zhang X."/>
            <person name="Ji Z."/>
            <person name="Zhao W."/>
            <person name="Sun Y."/>
            <person name="Zhang Z."/>
            <person name="Bao J."/>
            <person name="Han Y."/>
            <person name="Dong L."/>
            <person name="Ji J."/>
            <person name="Chen P."/>
            <person name="Wu S."/>
            <person name="Liu J."/>
            <person name="Xiao Y."/>
            <person name="Bu D."/>
            <person name="Tan J."/>
            <person name="Yang L."/>
            <person name="Ye C."/>
            <person name="Zhang J."/>
            <person name="Xu J."/>
            <person name="Zhou Y."/>
            <person name="Yu Y."/>
            <person name="Zhang B."/>
            <person name="Zhuang S."/>
            <person name="Wei H."/>
            <person name="Liu B."/>
            <person name="Lei M."/>
            <person name="Yu H."/>
            <person name="Li Y."/>
            <person name="Xu H."/>
            <person name="Wei S."/>
            <person name="He X."/>
            <person name="Fang L."/>
            <person name="Zhang Z."/>
            <person name="Zhang Y."/>
            <person name="Huang X."/>
            <person name="Su Z."/>
            <person name="Tong W."/>
            <person name="Li J."/>
            <person name="Tong Z."/>
            <person name="Li S."/>
            <person name="Ye J."/>
            <person name="Wang L."/>
            <person name="Fang L."/>
            <person name="Lei T."/>
            <person name="Chen C.-S."/>
            <person name="Chen H.-C."/>
            <person name="Xu Z."/>
            <person name="Li H."/>
            <person name="Huang H."/>
            <person name="Zhang F."/>
            <person name="Xu H."/>
            <person name="Li N."/>
            <person name="Zhao C."/>
            <person name="Li S."/>
            <person name="Dong L."/>
            <person name="Huang Y."/>
            <person name="Li L."/>
            <person name="Xi Y."/>
            <person name="Qi Q."/>
            <person name="Li W."/>
            <person name="Zhang B."/>
            <person name="Hu W."/>
            <person name="Zhang Y."/>
            <person name="Tian X."/>
            <person name="Jiao Y."/>
            <person name="Liang X."/>
            <person name="Jin J."/>
            <person name="Gao L."/>
            <person name="Zheng W."/>
            <person name="Hao B."/>
            <person name="Liu S.-M."/>
            <person name="Wang W."/>
            <person name="Yuan L."/>
            <person name="Cao M."/>
            <person name="McDermott J."/>
            <person name="Samudrala R."/>
            <person name="Wang J."/>
            <person name="Wong G.K.-S."/>
            <person name="Yang H."/>
        </authorList>
    </citation>
    <scope>NUCLEOTIDE SEQUENCE [LARGE SCALE GENOMIC DNA]</scope>
    <source>
        <strain>cv. Nipponbare</strain>
    </source>
</reference>
<keyword id="KW-0052">Apoplast</keyword>
<keyword id="KW-1015">Disulfide bond</keyword>
<keyword id="KW-0464">Manganese</keyword>
<keyword id="KW-0479">Metal-binding</keyword>
<keyword id="KW-1185">Reference proteome</keyword>
<keyword id="KW-0964">Secreted</keyword>
<keyword id="KW-0732">Signal</keyword>
<protein>
    <recommendedName>
        <fullName>Germin-like protein 4-1</fullName>
    </recommendedName>
</protein>
<name>GL41_ORYSJ</name>
<feature type="signal peptide" evidence="2">
    <location>
        <begin position="1"/>
        <end position="27"/>
    </location>
</feature>
<feature type="chain" id="PRO_0000365510" description="Germin-like protein 4-1">
    <location>
        <begin position="28"/>
        <end position="254"/>
    </location>
</feature>
<feature type="domain" description="Cupin type-1" evidence="2">
    <location>
        <begin position="67"/>
        <end position="220"/>
    </location>
</feature>
<feature type="binding site" evidence="1">
    <location>
        <position position="115"/>
    </location>
    <ligand>
        <name>Mn(2+)</name>
        <dbReference type="ChEBI" id="CHEBI:29035"/>
    </ligand>
</feature>
<feature type="binding site" evidence="1">
    <location>
        <position position="117"/>
    </location>
    <ligand>
        <name>Mn(2+)</name>
        <dbReference type="ChEBI" id="CHEBI:29035"/>
    </ligand>
</feature>
<feature type="binding site" evidence="1">
    <location>
        <position position="122"/>
    </location>
    <ligand>
        <name>Mn(2+)</name>
        <dbReference type="ChEBI" id="CHEBI:29035"/>
    </ligand>
</feature>
<feature type="binding site" evidence="1">
    <location>
        <position position="166"/>
    </location>
    <ligand>
        <name>Mn(2+)</name>
        <dbReference type="ChEBI" id="CHEBI:29035"/>
    </ligand>
</feature>
<feature type="disulfide bond" evidence="1">
    <location>
        <begin position="37"/>
        <end position="52"/>
    </location>
</feature>
<proteinExistence type="evidence at transcript level"/>
<sequence length="254" mass="25658">MASRAFAAVFAAVALVVCSSVLPRALASDPSQLQDFCVADKLSAVFVNGFVCKNPKQVTANDFFLPKALGVPGNTVNAQGSAVTPVTVNELPGLNTLGISFARIDFAPNGQNPPHTHPRATEILTVLQGTLLVGFVTSNQPGGGNLQFTKLLGPGDVFVFPQGLIHFQLNNGAVPAVAIAALSSQNPGVITIANAVFGSTPPILDDVLAKAFMIDKDQVDWIQAKFAAPPAASGGGGGFIGGGGGGGFPGGGAP</sequence>
<comment type="function">
    <text>May play a role in plant defense. Probably has no oxalate oxidase activity even if the active site is conserved.</text>
</comment>
<comment type="subunit">
    <text evidence="1">Oligomer (believed to be a pentamer but probably hexamer).</text>
</comment>
<comment type="subcellular location">
    <subcellularLocation>
        <location evidence="1">Secreted</location>
        <location evidence="1">Extracellular space</location>
        <location evidence="1">Apoplast</location>
    </subcellularLocation>
</comment>
<comment type="similarity">
    <text evidence="3">Belongs to the germin family.</text>
</comment>
<comment type="sequence caution" evidence="3">
    <conflict type="erroneous gene model prediction">
        <sequence resource="EMBL-CDS" id="BAF15802"/>
    </conflict>
</comment>